<evidence type="ECO:0000255" key="1">
    <source>
        <dbReference type="HAMAP-Rule" id="MF_01820"/>
    </source>
</evidence>
<evidence type="ECO:0000255" key="2">
    <source>
        <dbReference type="PROSITE-ProRule" id="PRU01058"/>
    </source>
</evidence>
<keyword id="KW-0963">Cytoplasm</keyword>
<keyword id="KW-0342">GTP-binding</keyword>
<keyword id="KW-0378">Hydrolase</keyword>
<keyword id="KW-0479">Metal-binding</keyword>
<keyword id="KW-0547">Nucleotide-binding</keyword>
<keyword id="KW-0690">Ribosome biogenesis</keyword>
<keyword id="KW-0694">RNA-binding</keyword>
<keyword id="KW-0699">rRNA-binding</keyword>
<keyword id="KW-0862">Zinc</keyword>
<gene>
    <name evidence="1" type="primary">rsgA</name>
    <name type="ordered locus">gbs1820</name>
</gene>
<accession>Q8E3D9</accession>
<sequence>MQGRIVKSLAGFYYVESDGVVYQTRARGNFRKKGQIPYVGDWVEFSSQDQSEGYILSIEERKNSLVRPPIVNIDQAVVIMSAKEPDFNANLLDRFLVLLEYKMIQPIIYISKLDLLDDLVVIDDIREHYQNIGYVFCYSQEELLPLLADKVTVFMGQTGVGKSTLLNKIAPELKLETGEISDSLGRGRHTTRAVSFYNVHKGKIADTPGFSSLDYEVDNAEDLNESFPELRRLSHFCKFRSCTHTHEPKCAVKEALTQGQLWQVRYDNYLQFLSEIENRRETYKKVIKRK</sequence>
<comment type="function">
    <text evidence="1">One of several proteins that assist in the late maturation steps of the functional core of the 30S ribosomal subunit. Helps release RbfA from mature subunits. May play a role in the assembly of ribosomal proteins into the subunit. Circularly permuted GTPase that catalyzes slow GTP hydrolysis, GTPase activity is stimulated by the 30S ribosomal subunit.</text>
</comment>
<comment type="cofactor">
    <cofactor evidence="1">
        <name>Zn(2+)</name>
        <dbReference type="ChEBI" id="CHEBI:29105"/>
    </cofactor>
    <text evidence="1">Binds 1 zinc ion per subunit.</text>
</comment>
<comment type="subunit">
    <text evidence="1">Monomer. Associates with 30S ribosomal subunit, binds 16S rRNA.</text>
</comment>
<comment type="subcellular location">
    <subcellularLocation>
        <location evidence="1">Cytoplasm</location>
    </subcellularLocation>
</comment>
<comment type="similarity">
    <text evidence="1">Belongs to the TRAFAC class YlqF/YawG GTPase family. RsgA subfamily.</text>
</comment>
<reference key="1">
    <citation type="journal article" date="2002" name="Mol. Microbiol.">
        <title>Genome sequence of Streptococcus agalactiae, a pathogen causing invasive neonatal disease.</title>
        <authorList>
            <person name="Glaser P."/>
            <person name="Rusniok C."/>
            <person name="Buchrieser C."/>
            <person name="Chevalier F."/>
            <person name="Frangeul L."/>
            <person name="Msadek T."/>
            <person name="Zouine M."/>
            <person name="Couve E."/>
            <person name="Lalioui L."/>
            <person name="Poyart C."/>
            <person name="Trieu-Cuot P."/>
            <person name="Kunst F."/>
        </authorList>
    </citation>
    <scope>NUCLEOTIDE SEQUENCE [LARGE SCALE GENOMIC DNA]</scope>
    <source>
        <strain>NEM316</strain>
    </source>
</reference>
<dbReference type="EC" id="3.6.1.-" evidence="1"/>
<dbReference type="EMBL" id="AL766853">
    <property type="protein sequence ID" value="CAD47479.1"/>
    <property type="molecule type" value="Genomic_DNA"/>
</dbReference>
<dbReference type="RefSeq" id="WP_001162033.1">
    <property type="nucleotide sequence ID" value="NC_004368.1"/>
</dbReference>
<dbReference type="SMR" id="Q8E3D9"/>
<dbReference type="KEGG" id="san:gbs1820"/>
<dbReference type="eggNOG" id="COG1162">
    <property type="taxonomic scope" value="Bacteria"/>
</dbReference>
<dbReference type="HOGENOM" id="CLU_033617_2_1_9"/>
<dbReference type="Proteomes" id="UP000000823">
    <property type="component" value="Chromosome"/>
</dbReference>
<dbReference type="GO" id="GO:0005737">
    <property type="term" value="C:cytoplasm"/>
    <property type="evidence" value="ECO:0007669"/>
    <property type="project" value="UniProtKB-SubCell"/>
</dbReference>
<dbReference type="GO" id="GO:0005525">
    <property type="term" value="F:GTP binding"/>
    <property type="evidence" value="ECO:0007669"/>
    <property type="project" value="UniProtKB-UniRule"/>
</dbReference>
<dbReference type="GO" id="GO:0003924">
    <property type="term" value="F:GTPase activity"/>
    <property type="evidence" value="ECO:0007669"/>
    <property type="project" value="UniProtKB-UniRule"/>
</dbReference>
<dbReference type="GO" id="GO:0046872">
    <property type="term" value="F:metal ion binding"/>
    <property type="evidence" value="ECO:0007669"/>
    <property type="project" value="UniProtKB-KW"/>
</dbReference>
<dbReference type="GO" id="GO:0019843">
    <property type="term" value="F:rRNA binding"/>
    <property type="evidence" value="ECO:0007669"/>
    <property type="project" value="UniProtKB-KW"/>
</dbReference>
<dbReference type="GO" id="GO:0042274">
    <property type="term" value="P:ribosomal small subunit biogenesis"/>
    <property type="evidence" value="ECO:0007669"/>
    <property type="project" value="UniProtKB-UniRule"/>
</dbReference>
<dbReference type="CDD" id="cd04466">
    <property type="entry name" value="S1_YloQ_GTPase"/>
    <property type="match status" value="1"/>
</dbReference>
<dbReference type="CDD" id="cd01854">
    <property type="entry name" value="YjeQ_EngC"/>
    <property type="match status" value="1"/>
</dbReference>
<dbReference type="Gene3D" id="2.40.50.140">
    <property type="entry name" value="Nucleic acid-binding proteins"/>
    <property type="match status" value="1"/>
</dbReference>
<dbReference type="Gene3D" id="3.40.50.300">
    <property type="entry name" value="P-loop containing nucleotide triphosphate hydrolases"/>
    <property type="match status" value="1"/>
</dbReference>
<dbReference type="Gene3D" id="1.10.40.50">
    <property type="entry name" value="Probable gtpase engc, domain 3"/>
    <property type="match status" value="1"/>
</dbReference>
<dbReference type="HAMAP" id="MF_01820">
    <property type="entry name" value="GTPase_RsgA"/>
    <property type="match status" value="1"/>
</dbReference>
<dbReference type="InterPro" id="IPR030378">
    <property type="entry name" value="G_CP_dom"/>
</dbReference>
<dbReference type="InterPro" id="IPR012340">
    <property type="entry name" value="NA-bd_OB-fold"/>
</dbReference>
<dbReference type="InterPro" id="IPR027417">
    <property type="entry name" value="P-loop_NTPase"/>
</dbReference>
<dbReference type="InterPro" id="IPR004881">
    <property type="entry name" value="Ribosome_biogen_GTPase_RsgA"/>
</dbReference>
<dbReference type="InterPro" id="IPR010914">
    <property type="entry name" value="RsgA_GTPase_dom"/>
</dbReference>
<dbReference type="InterPro" id="IPR031944">
    <property type="entry name" value="RsgA_N"/>
</dbReference>
<dbReference type="NCBIfam" id="TIGR00157">
    <property type="entry name" value="ribosome small subunit-dependent GTPase A"/>
    <property type="match status" value="1"/>
</dbReference>
<dbReference type="PANTHER" id="PTHR32120">
    <property type="entry name" value="SMALL RIBOSOMAL SUBUNIT BIOGENESIS GTPASE RSGA"/>
    <property type="match status" value="1"/>
</dbReference>
<dbReference type="PANTHER" id="PTHR32120:SF11">
    <property type="entry name" value="SMALL RIBOSOMAL SUBUNIT BIOGENESIS GTPASE RSGA 1, MITOCHONDRIAL-RELATED"/>
    <property type="match status" value="1"/>
</dbReference>
<dbReference type="Pfam" id="PF03193">
    <property type="entry name" value="RsgA_GTPase"/>
    <property type="match status" value="1"/>
</dbReference>
<dbReference type="Pfam" id="PF16745">
    <property type="entry name" value="RsgA_N"/>
    <property type="match status" value="1"/>
</dbReference>
<dbReference type="SUPFAM" id="SSF50249">
    <property type="entry name" value="Nucleic acid-binding proteins"/>
    <property type="match status" value="1"/>
</dbReference>
<dbReference type="SUPFAM" id="SSF52540">
    <property type="entry name" value="P-loop containing nucleoside triphosphate hydrolases"/>
    <property type="match status" value="1"/>
</dbReference>
<dbReference type="PROSITE" id="PS50936">
    <property type="entry name" value="ENGC_GTPASE"/>
    <property type="match status" value="1"/>
</dbReference>
<dbReference type="PROSITE" id="PS51721">
    <property type="entry name" value="G_CP"/>
    <property type="match status" value="1"/>
</dbReference>
<feature type="chain" id="PRO_0000171523" description="Small ribosomal subunit biogenesis GTPase RsgA">
    <location>
        <begin position="1"/>
        <end position="290"/>
    </location>
</feature>
<feature type="domain" description="CP-type G" evidence="2">
    <location>
        <begin position="62"/>
        <end position="213"/>
    </location>
</feature>
<feature type="binding site" evidence="1">
    <location>
        <begin position="111"/>
        <end position="114"/>
    </location>
    <ligand>
        <name>GTP</name>
        <dbReference type="ChEBI" id="CHEBI:37565"/>
    </ligand>
</feature>
<feature type="binding site" evidence="1">
    <location>
        <begin position="156"/>
        <end position="164"/>
    </location>
    <ligand>
        <name>GTP</name>
        <dbReference type="ChEBI" id="CHEBI:37565"/>
    </ligand>
</feature>
<feature type="binding site" evidence="1">
    <location>
        <position position="237"/>
    </location>
    <ligand>
        <name>Zn(2+)</name>
        <dbReference type="ChEBI" id="CHEBI:29105"/>
    </ligand>
</feature>
<feature type="binding site" evidence="1">
    <location>
        <position position="242"/>
    </location>
    <ligand>
        <name>Zn(2+)</name>
        <dbReference type="ChEBI" id="CHEBI:29105"/>
    </ligand>
</feature>
<feature type="binding site" evidence="1">
    <location>
        <position position="244"/>
    </location>
    <ligand>
        <name>Zn(2+)</name>
        <dbReference type="ChEBI" id="CHEBI:29105"/>
    </ligand>
</feature>
<feature type="binding site" evidence="1">
    <location>
        <position position="250"/>
    </location>
    <ligand>
        <name>Zn(2+)</name>
        <dbReference type="ChEBI" id="CHEBI:29105"/>
    </ligand>
</feature>
<protein>
    <recommendedName>
        <fullName evidence="1">Small ribosomal subunit biogenesis GTPase RsgA</fullName>
        <ecNumber evidence="1">3.6.1.-</ecNumber>
    </recommendedName>
</protein>
<proteinExistence type="inferred from homology"/>
<name>RSGA_STRA3</name>
<organism>
    <name type="scientific">Streptococcus agalactiae serotype III (strain NEM316)</name>
    <dbReference type="NCBI Taxonomy" id="211110"/>
    <lineage>
        <taxon>Bacteria</taxon>
        <taxon>Bacillati</taxon>
        <taxon>Bacillota</taxon>
        <taxon>Bacilli</taxon>
        <taxon>Lactobacillales</taxon>
        <taxon>Streptococcaceae</taxon>
        <taxon>Streptococcus</taxon>
    </lineage>
</organism>